<feature type="chain" id="PRO_0000098758" description="Tryptophan synthase alpha chain">
    <location>
        <begin position="1"/>
        <end position="270"/>
    </location>
</feature>
<feature type="active site" description="Proton acceptor" evidence="1">
    <location>
        <position position="49"/>
    </location>
</feature>
<feature type="active site" description="Proton acceptor" evidence="1">
    <location>
        <position position="60"/>
    </location>
</feature>
<organism>
    <name type="scientific">Buchnera aphidicola subsp. Melaphis rhois</name>
    <dbReference type="NCBI Taxonomy" id="118103"/>
    <lineage>
        <taxon>Bacteria</taxon>
        <taxon>Pseudomonadati</taxon>
        <taxon>Pseudomonadota</taxon>
        <taxon>Gammaproteobacteria</taxon>
        <taxon>Enterobacterales</taxon>
        <taxon>Erwiniaceae</taxon>
        <taxon>Buchnera</taxon>
    </lineage>
</organism>
<dbReference type="EC" id="4.2.1.20" evidence="1"/>
<dbReference type="EMBL" id="AF132318">
    <property type="protein sequence ID" value="AAF14255.1"/>
    <property type="molecule type" value="Genomic_DNA"/>
</dbReference>
<dbReference type="SMR" id="Q9RQ33"/>
<dbReference type="UniPathway" id="UPA00035">
    <property type="reaction ID" value="UER00044"/>
</dbReference>
<dbReference type="GO" id="GO:0005829">
    <property type="term" value="C:cytosol"/>
    <property type="evidence" value="ECO:0007669"/>
    <property type="project" value="TreeGrafter"/>
</dbReference>
<dbReference type="GO" id="GO:0004834">
    <property type="term" value="F:tryptophan synthase activity"/>
    <property type="evidence" value="ECO:0007669"/>
    <property type="project" value="UniProtKB-UniRule"/>
</dbReference>
<dbReference type="CDD" id="cd04724">
    <property type="entry name" value="Tryptophan_synthase_alpha"/>
    <property type="match status" value="1"/>
</dbReference>
<dbReference type="FunFam" id="3.20.20.70:FF:000037">
    <property type="entry name" value="Tryptophan synthase alpha chain"/>
    <property type="match status" value="1"/>
</dbReference>
<dbReference type="Gene3D" id="3.20.20.70">
    <property type="entry name" value="Aldolase class I"/>
    <property type="match status" value="1"/>
</dbReference>
<dbReference type="HAMAP" id="MF_00131">
    <property type="entry name" value="Trp_synth_alpha"/>
    <property type="match status" value="1"/>
</dbReference>
<dbReference type="InterPro" id="IPR013785">
    <property type="entry name" value="Aldolase_TIM"/>
</dbReference>
<dbReference type="InterPro" id="IPR011060">
    <property type="entry name" value="RibuloseP-bd_barrel"/>
</dbReference>
<dbReference type="InterPro" id="IPR018204">
    <property type="entry name" value="Trp_synthase_alpha_AS"/>
</dbReference>
<dbReference type="InterPro" id="IPR002028">
    <property type="entry name" value="Trp_synthase_suA"/>
</dbReference>
<dbReference type="NCBIfam" id="TIGR00262">
    <property type="entry name" value="trpA"/>
    <property type="match status" value="1"/>
</dbReference>
<dbReference type="PANTHER" id="PTHR43406:SF1">
    <property type="entry name" value="TRYPTOPHAN SYNTHASE ALPHA CHAIN, CHLOROPLASTIC"/>
    <property type="match status" value="1"/>
</dbReference>
<dbReference type="PANTHER" id="PTHR43406">
    <property type="entry name" value="TRYPTOPHAN SYNTHASE, ALPHA CHAIN"/>
    <property type="match status" value="1"/>
</dbReference>
<dbReference type="Pfam" id="PF00290">
    <property type="entry name" value="Trp_syntA"/>
    <property type="match status" value="1"/>
</dbReference>
<dbReference type="SUPFAM" id="SSF51366">
    <property type="entry name" value="Ribulose-phoshate binding barrel"/>
    <property type="match status" value="1"/>
</dbReference>
<dbReference type="PROSITE" id="PS00167">
    <property type="entry name" value="TRP_SYNTHASE_ALPHA"/>
    <property type="match status" value="1"/>
</dbReference>
<evidence type="ECO:0000255" key="1">
    <source>
        <dbReference type="HAMAP-Rule" id="MF_00131"/>
    </source>
</evidence>
<protein>
    <recommendedName>
        <fullName evidence="1">Tryptophan synthase alpha chain</fullName>
        <ecNumber evidence="1">4.2.1.20</ecNumber>
    </recommendedName>
</protein>
<gene>
    <name evidence="1" type="primary">trpA</name>
</gene>
<reference key="1">
    <citation type="journal article" date="1999" name="Mol. Biol. Evol.">
        <title>Sequence evolution in bacterial endosymbionts having extreme base compositions.</title>
        <authorList>
            <person name="Clark M.A."/>
            <person name="Moran N.A."/>
            <person name="Baumann P."/>
        </authorList>
    </citation>
    <scope>NUCLEOTIDE SEQUENCE [GENOMIC DNA]</scope>
</reference>
<sequence length="270" mass="30398">MNRYQKLCKKLIPFKKGCFIPFVVLGDPSIDMSLKIINALIENGADGLELGIPFSDPIADGEIIQKANLRAFNSKINLHKCFDILSEIREKHQTIPIGLLLYSNLIFKFGINKFYLKCYKIGIDSILIADLPIEESYVFRKYAVINNILPVFICPPDAKKNVIKNIAIHSQGYIYLLSRSGVTGINQEIMIPPLSLINKLKKLTKTPLIQGFGVSYPYQIQKIILSGISGVICGSIIAKLIENYFQDDDKLIKEIIFLSKSFKKATIIIE</sequence>
<comment type="function">
    <text evidence="1">The alpha subunit is responsible for the aldol cleavage of indoleglycerol phosphate to indole and glyceraldehyde 3-phosphate.</text>
</comment>
<comment type="catalytic activity">
    <reaction evidence="1">
        <text>(1S,2R)-1-C-(indol-3-yl)glycerol 3-phosphate + L-serine = D-glyceraldehyde 3-phosphate + L-tryptophan + H2O</text>
        <dbReference type="Rhea" id="RHEA:10532"/>
        <dbReference type="ChEBI" id="CHEBI:15377"/>
        <dbReference type="ChEBI" id="CHEBI:33384"/>
        <dbReference type="ChEBI" id="CHEBI:57912"/>
        <dbReference type="ChEBI" id="CHEBI:58866"/>
        <dbReference type="ChEBI" id="CHEBI:59776"/>
        <dbReference type="EC" id="4.2.1.20"/>
    </reaction>
</comment>
<comment type="pathway">
    <text evidence="1">Amino-acid biosynthesis; L-tryptophan biosynthesis; L-tryptophan from chorismate: step 5/5.</text>
</comment>
<comment type="subunit">
    <text evidence="1">Tetramer of two alpha and two beta chains.</text>
</comment>
<comment type="similarity">
    <text evidence="1">Belongs to the TrpA family.</text>
</comment>
<accession>Q9RQ33</accession>
<keyword id="KW-0028">Amino-acid biosynthesis</keyword>
<keyword id="KW-0057">Aromatic amino acid biosynthesis</keyword>
<keyword id="KW-0456">Lyase</keyword>
<keyword id="KW-0822">Tryptophan biosynthesis</keyword>
<proteinExistence type="inferred from homology"/>
<name>TRPA_BUCMH</name>